<comment type="function">
    <text evidence="1">Involved in chromosome condensation, segregation and cell cycle progression. May participate in facilitating chromosome segregation by condensation DNA from both sides of a centrally located replisome during cell division. Not required for mini-F plasmid partitioning. Probably acts via its interaction with MukB and MukE. Overexpression results in anucleate cells. It has a calcium binding activity.</text>
</comment>
<comment type="subunit">
    <text evidence="1">Interacts, and probably forms a ternary complex, with MukE and MukB via its C-terminal region. The complex formation is stimulated by calcium or magnesium. It is required for an interaction between MukE and MukB.</text>
</comment>
<comment type="subcellular location">
    <subcellularLocation>
        <location evidence="1">Cytoplasm</location>
        <location evidence="1">Nucleoid</location>
    </subcellularLocation>
    <text evidence="1">Restricted to the nucleoid region.</text>
</comment>
<comment type="similarity">
    <text evidence="1">Belongs to the MukF family.</text>
</comment>
<name>MUKF_ECOL5</name>
<reference key="1">
    <citation type="journal article" date="2006" name="Mol. Microbiol.">
        <title>Role of pathogenicity island-associated integrases in the genome plasticity of uropathogenic Escherichia coli strain 536.</title>
        <authorList>
            <person name="Hochhut B."/>
            <person name="Wilde C."/>
            <person name="Balling G."/>
            <person name="Middendorf B."/>
            <person name="Dobrindt U."/>
            <person name="Brzuszkiewicz E."/>
            <person name="Gottschalk G."/>
            <person name="Carniel E."/>
            <person name="Hacker J."/>
        </authorList>
    </citation>
    <scope>NUCLEOTIDE SEQUENCE [LARGE SCALE GENOMIC DNA]</scope>
    <source>
        <strain>536 / UPEC</strain>
    </source>
</reference>
<feature type="chain" id="PRO_1000069929" description="Chromosome partition protein MukF">
    <location>
        <begin position="1"/>
        <end position="440"/>
    </location>
</feature>
<feature type="region of interest" description="Leucine-zipper">
    <location>
        <begin position="208"/>
        <end position="236"/>
    </location>
</feature>
<dbReference type="EMBL" id="CP000247">
    <property type="protein sequence ID" value="ABG68948.1"/>
    <property type="molecule type" value="Genomic_DNA"/>
</dbReference>
<dbReference type="RefSeq" id="WP_001288856.1">
    <property type="nucleotide sequence ID" value="NC_008253.1"/>
</dbReference>
<dbReference type="SMR" id="Q0TJD1"/>
<dbReference type="KEGG" id="ecp:ECP_0933"/>
<dbReference type="HOGENOM" id="CLU_049853_0_0_6"/>
<dbReference type="Proteomes" id="UP000009182">
    <property type="component" value="Chromosome"/>
</dbReference>
<dbReference type="GO" id="GO:0005737">
    <property type="term" value="C:cytoplasm"/>
    <property type="evidence" value="ECO:0007669"/>
    <property type="project" value="UniProtKB-UniRule"/>
</dbReference>
<dbReference type="GO" id="GO:0009295">
    <property type="term" value="C:nucleoid"/>
    <property type="evidence" value="ECO:0007669"/>
    <property type="project" value="UniProtKB-SubCell"/>
</dbReference>
<dbReference type="GO" id="GO:0005509">
    <property type="term" value="F:calcium ion binding"/>
    <property type="evidence" value="ECO:0007669"/>
    <property type="project" value="UniProtKB-UniRule"/>
</dbReference>
<dbReference type="GO" id="GO:0051301">
    <property type="term" value="P:cell division"/>
    <property type="evidence" value="ECO:0007669"/>
    <property type="project" value="UniProtKB-KW"/>
</dbReference>
<dbReference type="GO" id="GO:0030261">
    <property type="term" value="P:chromosome condensation"/>
    <property type="evidence" value="ECO:0007669"/>
    <property type="project" value="UniProtKB-KW"/>
</dbReference>
<dbReference type="GO" id="GO:0007059">
    <property type="term" value="P:chromosome segregation"/>
    <property type="evidence" value="ECO:0007669"/>
    <property type="project" value="UniProtKB-UniRule"/>
</dbReference>
<dbReference type="GO" id="GO:0006260">
    <property type="term" value="P:DNA replication"/>
    <property type="evidence" value="ECO:0007669"/>
    <property type="project" value="UniProtKB-UniRule"/>
</dbReference>
<dbReference type="CDD" id="cd16337">
    <property type="entry name" value="MukF_C"/>
    <property type="match status" value="1"/>
</dbReference>
<dbReference type="CDD" id="cd16335">
    <property type="entry name" value="MukF_N"/>
    <property type="match status" value="1"/>
</dbReference>
<dbReference type="Gene3D" id="1.20.58.590">
    <property type="entry name" value="Chromosome partition protein MukF, middle domain"/>
    <property type="match status" value="1"/>
</dbReference>
<dbReference type="Gene3D" id="1.10.225.40">
    <property type="entry name" value="MukF, C-terminal domain"/>
    <property type="match status" value="1"/>
</dbReference>
<dbReference type="Gene3D" id="1.10.10.10">
    <property type="entry name" value="Winged helix-like DNA-binding domain superfamily/Winged helix DNA-binding domain"/>
    <property type="match status" value="1"/>
</dbReference>
<dbReference type="HAMAP" id="MF_01803">
    <property type="entry name" value="MukF"/>
    <property type="match status" value="1"/>
</dbReference>
<dbReference type="InterPro" id="IPR005582">
    <property type="entry name" value="Chromosome_partition_MukF"/>
</dbReference>
<dbReference type="InterPro" id="IPR033441">
    <property type="entry name" value="MukF_C"/>
</dbReference>
<dbReference type="InterPro" id="IPR038198">
    <property type="entry name" value="MukF_C_sf"/>
</dbReference>
<dbReference type="InterPro" id="IPR033440">
    <property type="entry name" value="MukF_M"/>
</dbReference>
<dbReference type="InterPro" id="IPR036141">
    <property type="entry name" value="MukF_M_sp"/>
</dbReference>
<dbReference type="InterPro" id="IPR033439">
    <property type="entry name" value="MukF_WHTH"/>
</dbReference>
<dbReference type="InterPro" id="IPR036388">
    <property type="entry name" value="WH-like_DNA-bd_sf"/>
</dbReference>
<dbReference type="InterPro" id="IPR036390">
    <property type="entry name" value="WH_DNA-bd_sf"/>
</dbReference>
<dbReference type="NCBIfam" id="NF003615">
    <property type="entry name" value="PRK05260.1"/>
    <property type="match status" value="1"/>
</dbReference>
<dbReference type="Pfam" id="PF03882">
    <property type="entry name" value="KicB"/>
    <property type="match status" value="1"/>
</dbReference>
<dbReference type="Pfam" id="PF17193">
    <property type="entry name" value="MukF_C"/>
    <property type="match status" value="1"/>
</dbReference>
<dbReference type="Pfam" id="PF17192">
    <property type="entry name" value="MukF_M"/>
    <property type="match status" value="1"/>
</dbReference>
<dbReference type="PIRSF" id="PIRSF018282">
    <property type="entry name" value="MukF"/>
    <property type="match status" value="1"/>
</dbReference>
<dbReference type="SUPFAM" id="SSF140570">
    <property type="entry name" value="MukF C-terminal domain-like"/>
    <property type="match status" value="1"/>
</dbReference>
<dbReference type="SUPFAM" id="SSF46785">
    <property type="entry name" value="Winged helix' DNA-binding domain"/>
    <property type="match status" value="1"/>
</dbReference>
<gene>
    <name evidence="1" type="primary">mukF</name>
    <name type="ordered locus">ECP_0933</name>
</gene>
<organism>
    <name type="scientific">Escherichia coli O6:K15:H31 (strain 536 / UPEC)</name>
    <dbReference type="NCBI Taxonomy" id="362663"/>
    <lineage>
        <taxon>Bacteria</taxon>
        <taxon>Pseudomonadati</taxon>
        <taxon>Pseudomonadota</taxon>
        <taxon>Gammaproteobacteria</taxon>
        <taxon>Enterobacterales</taxon>
        <taxon>Enterobacteriaceae</taxon>
        <taxon>Escherichia</taxon>
    </lineage>
</organism>
<sequence length="440" mass="50607">MSEFSQTVPELVAWARKNDFSISLPVDRLSFLLAVATLNGERLDGEMSEGELVDAFRHVSDAFEQTSETIGVRANNAINDMVRQRLLNRFTSEQAEGNAIYRLTPLGIGITDYYIRQREFSTLRLSMQLSIVAGELKRAADAAEEGGDEFHWHRNVYAPLKYSVAEIFDSIDLTQRLMDEQQQQVKDDIAQLLNKDWRAAISSCELLLSETSGTLRELQDTLEAAGDKLQANLLRIQDATMTHDDLHFVDRLVFDLQSKLDRIISWGQQSIDLWIGYDRHVHKFIRTAIDMDKNRVFAQRLRQSVQTYFDEPWALTYANADRLLDMRDEEMVLRDEEVTGELPEDLEYEEFNEIREQLAAIIEEQLAVYKTRQVPLDLGLVVREYLSQYPRARHFDVARIVIDQAVRLGVAQADFTGLPAKWQPINDYGAKVQAHVIDKY</sequence>
<keyword id="KW-0106">Calcium</keyword>
<keyword id="KW-0131">Cell cycle</keyword>
<keyword id="KW-0132">Cell division</keyword>
<keyword id="KW-0159">Chromosome partition</keyword>
<keyword id="KW-0963">Cytoplasm</keyword>
<keyword id="KW-0226">DNA condensation</keyword>
<protein>
    <recommendedName>
        <fullName evidence="1">Chromosome partition protein MukF</fullName>
    </recommendedName>
</protein>
<proteinExistence type="inferred from homology"/>
<evidence type="ECO:0000255" key="1">
    <source>
        <dbReference type="HAMAP-Rule" id="MF_01803"/>
    </source>
</evidence>
<accession>Q0TJD1</accession>